<evidence type="ECO:0000250" key="1">
    <source>
        <dbReference type="UniProtKB" id="Q9HD23"/>
    </source>
</evidence>
<evidence type="ECO:0000255" key="2"/>
<evidence type="ECO:0000305" key="3"/>
<sequence length="443" mass="50244">MECLRSLPCLLPRAMRLPRRTLCALALDLTSVAPPVAASGRRANLIGRSRAAQLCEPGRLRVAGEVHRFRTSDVSQATLASVAPVFTVTKFDKQGNVTSFERKKTELYQELGLQARDLRFQHVMSITVRNNRIIMRMEYLKAVITPECLLILDYRNLNLEQWLFRELPSQLSGEGQLVTYPLPFEFRAIEALLQYWINTLQGKLSVLQPLILETLDALVDPKHSSVDKSKLHILLQNGKSLSELETDIKIFKESILEILDEEELLEELCVSKWSDPQVFEKSSAGIDHAEEMELLLENYYRLADDLSNAARELRVLIDDSQSIIFINLGSHRNVMMRLNLQLTMGTFSLSLFGLMGVAFGMNLESSLEEDHRIFWLITGIMFMGSGLIWRRLLSFLGRQLEAPLPPMMASLPKKTLLADRSMELKNSLRLDGLGSGRSILTNR</sequence>
<gene>
    <name type="primary">MRS2</name>
    <name type="synonym">MRS2L</name>
</gene>
<name>MRS2_PONAB</name>
<proteinExistence type="evidence at transcript level"/>
<reference key="1">
    <citation type="submission" date="2004-11" db="EMBL/GenBank/DDBJ databases">
        <authorList>
            <consortium name="The German cDNA consortium"/>
        </authorList>
    </citation>
    <scope>NUCLEOTIDE SEQUENCE [LARGE SCALE MRNA]</scope>
    <source>
        <tissue>Brain cortex</tissue>
    </source>
</reference>
<keyword id="KW-0406">Ion transport</keyword>
<keyword id="KW-0460">Magnesium</keyword>
<keyword id="KW-0472">Membrane</keyword>
<keyword id="KW-0479">Metal-binding</keyword>
<keyword id="KW-0496">Mitochondrion</keyword>
<keyword id="KW-0999">Mitochondrion inner membrane</keyword>
<keyword id="KW-1185">Reference proteome</keyword>
<keyword id="KW-0809">Transit peptide</keyword>
<keyword id="KW-0812">Transmembrane</keyword>
<keyword id="KW-1133">Transmembrane helix</keyword>
<keyword id="KW-0813">Transport</keyword>
<comment type="function">
    <text evidence="1">Magnesium transporter that mediates the influx of magnesium into the mitochondrial matrix and regulates magnesium metabolism (By similarity). Also permeable to calcium, sodium and potassium ions (By similarity). Required for normal expression of the mitochondrial respiratory complex I subunits (By similarity). May play a role in maintaining the inner mitochondrial membrane potential (By similarity).</text>
</comment>
<comment type="activity regulation">
    <text evidence="1">May be regulated by calcium ions.</text>
</comment>
<comment type="subunit">
    <text evidence="1">Homopentamer.</text>
</comment>
<comment type="subcellular location">
    <subcellularLocation>
        <location evidence="1">Mitochondrion inner membrane</location>
        <topology evidence="1">Multi-pass membrane protein</topology>
    </subcellularLocation>
</comment>
<comment type="domain">
    <text evidence="1">The GMN motif acts as an ion selectivity filter.</text>
</comment>
<comment type="similarity">
    <text evidence="3">Belongs to the CorA metal ion transporter (MIT) (TC 1.A.35) family.</text>
</comment>
<accession>Q5R447</accession>
<dbReference type="EMBL" id="CR861413">
    <property type="protein sequence ID" value="CAH93469.1"/>
    <property type="molecule type" value="mRNA"/>
</dbReference>
<dbReference type="RefSeq" id="NP_001127033.1">
    <property type="nucleotide sequence ID" value="NM_001133561.1"/>
</dbReference>
<dbReference type="SMR" id="Q5R447"/>
<dbReference type="FunCoup" id="Q5R447">
    <property type="interactions" value="1557"/>
</dbReference>
<dbReference type="STRING" id="9601.ENSPPYP00000018202"/>
<dbReference type="GeneID" id="100174059"/>
<dbReference type="KEGG" id="pon:100174059"/>
<dbReference type="CTD" id="57380"/>
<dbReference type="eggNOG" id="KOG2662">
    <property type="taxonomic scope" value="Eukaryota"/>
</dbReference>
<dbReference type="InParanoid" id="Q5R447"/>
<dbReference type="OrthoDB" id="10251508at2759"/>
<dbReference type="Proteomes" id="UP000001595">
    <property type="component" value="Unplaced"/>
</dbReference>
<dbReference type="GO" id="GO:0005743">
    <property type="term" value="C:mitochondrial inner membrane"/>
    <property type="evidence" value="ECO:0007669"/>
    <property type="project" value="UniProtKB-SubCell"/>
</dbReference>
<dbReference type="GO" id="GO:0005739">
    <property type="term" value="C:mitochondrion"/>
    <property type="evidence" value="ECO:0000250"/>
    <property type="project" value="UniProtKB"/>
</dbReference>
<dbReference type="GO" id="GO:0015095">
    <property type="term" value="F:magnesium ion transmembrane transporter activity"/>
    <property type="evidence" value="ECO:0000250"/>
    <property type="project" value="UniProtKB"/>
</dbReference>
<dbReference type="GO" id="GO:0045016">
    <property type="term" value="P:mitochondrial magnesium ion transmembrane transport"/>
    <property type="evidence" value="ECO:0000250"/>
    <property type="project" value="UniProtKB"/>
</dbReference>
<dbReference type="CDD" id="cd12823">
    <property type="entry name" value="Mrs2_Mfm1p-like"/>
    <property type="match status" value="1"/>
</dbReference>
<dbReference type="FunFam" id="1.20.58.340:FF:000007">
    <property type="entry name" value="Magnesium transporter MRS2 homolog, mitochondrial"/>
    <property type="match status" value="1"/>
</dbReference>
<dbReference type="FunFam" id="2.40.128.330:FF:000003">
    <property type="entry name" value="Magnesium transporter MRS2 homolog, mitochondrial"/>
    <property type="match status" value="1"/>
</dbReference>
<dbReference type="Gene3D" id="2.40.128.330">
    <property type="match status" value="1"/>
</dbReference>
<dbReference type="Gene3D" id="1.20.58.340">
    <property type="entry name" value="Magnesium transport protein CorA, transmembrane region"/>
    <property type="match status" value="1"/>
</dbReference>
<dbReference type="InterPro" id="IPR039204">
    <property type="entry name" value="MRS2-like"/>
</dbReference>
<dbReference type="PANTHER" id="PTHR13890:SF0">
    <property type="entry name" value="MAGNESIUM TRANSPORTER MRS2 HOMOLOG, MITOCHONDRIAL"/>
    <property type="match status" value="1"/>
</dbReference>
<dbReference type="PANTHER" id="PTHR13890">
    <property type="entry name" value="RNA SPLICING PROTEIN MRS2, MITOCHONDRIAL"/>
    <property type="match status" value="1"/>
</dbReference>
<dbReference type="Pfam" id="PF22099">
    <property type="entry name" value="MRS2-like"/>
    <property type="match status" value="1"/>
</dbReference>
<organism>
    <name type="scientific">Pongo abelii</name>
    <name type="common">Sumatran orangutan</name>
    <name type="synonym">Pongo pygmaeus abelii</name>
    <dbReference type="NCBI Taxonomy" id="9601"/>
    <lineage>
        <taxon>Eukaryota</taxon>
        <taxon>Metazoa</taxon>
        <taxon>Chordata</taxon>
        <taxon>Craniata</taxon>
        <taxon>Vertebrata</taxon>
        <taxon>Euteleostomi</taxon>
        <taxon>Mammalia</taxon>
        <taxon>Eutheria</taxon>
        <taxon>Euarchontoglires</taxon>
        <taxon>Primates</taxon>
        <taxon>Haplorrhini</taxon>
        <taxon>Catarrhini</taxon>
        <taxon>Hominidae</taxon>
        <taxon>Pongo</taxon>
    </lineage>
</organism>
<protein>
    <recommendedName>
        <fullName>Magnesium transporter MRS2 homolog, mitochondrial</fullName>
    </recommendedName>
    <alternativeName>
        <fullName>MRS2-like protein</fullName>
    </alternativeName>
</protein>
<feature type="transit peptide" description="Mitochondrion" evidence="2">
    <location>
        <begin position="1"/>
        <end position="49"/>
    </location>
</feature>
<feature type="chain" id="PRO_0000042840" description="Magnesium transporter MRS2 homolog, mitochondrial">
    <location>
        <begin position="50"/>
        <end position="443"/>
    </location>
</feature>
<feature type="topological domain" description="Mitochondrial matrix" evidence="1">
    <location>
        <begin position="50"/>
        <end position="339"/>
    </location>
</feature>
<feature type="transmembrane region" description="Helical; Name=1" evidence="1">
    <location>
        <begin position="340"/>
        <end position="359"/>
    </location>
</feature>
<feature type="topological domain" description="Mitochondrial intermembrane" evidence="1">
    <location>
        <begin position="360"/>
        <end position="370"/>
    </location>
</feature>
<feature type="transmembrane region" description="Helical; Name=2" evidence="1">
    <location>
        <begin position="371"/>
        <end position="401"/>
    </location>
</feature>
<feature type="topological domain" description="Mitochondrial matrix" evidence="1">
    <location>
        <begin position="402"/>
        <end position="443"/>
    </location>
</feature>
<feature type="short sequence motif" description="GMN motif" evidence="1">
    <location>
        <begin position="360"/>
        <end position="362"/>
    </location>
</feature>
<feature type="binding site" evidence="1">
    <location>
        <position position="243"/>
    </location>
    <ligand>
        <name>Mg(2+)</name>
        <dbReference type="ChEBI" id="CHEBI:18420"/>
        <label>1</label>
    </ligand>
</feature>
<feature type="binding site" evidence="1">
    <location>
        <position position="246"/>
    </location>
    <ligand>
        <name>Mg(2+)</name>
        <dbReference type="ChEBI" id="CHEBI:18420"/>
        <label>1</label>
    </ligand>
</feature>
<feature type="binding site" evidence="1">
    <location>
        <position position="247"/>
    </location>
    <ligand>
        <name>Mg(2+)</name>
        <dbReference type="ChEBI" id="CHEBI:18420"/>
        <label>1</label>
    </ligand>
</feature>
<feature type="binding site" evidence="1">
    <location>
        <position position="312"/>
    </location>
    <ligand>
        <name>Mg(2+)</name>
        <dbReference type="ChEBI" id="CHEBI:18420"/>
        <label>1</label>
    </ligand>
</feature>
<feature type="binding site" evidence="1">
    <location>
        <position position="329"/>
    </location>
    <ligand>
        <name>Mg(2+)</name>
        <dbReference type="ChEBI" id="CHEBI:18420"/>
        <label>2</label>
    </ligand>
</feature>
<feature type="binding site" evidence="1">
    <location>
        <position position="360"/>
    </location>
    <ligand>
        <name>Mg(2+)</name>
        <dbReference type="ChEBI" id="CHEBI:18420"/>
        <label>3</label>
    </ligand>
</feature>
<feature type="binding site" evidence="1">
    <location>
        <position position="362"/>
    </location>
    <ligand>
        <name>Mg(2+)</name>
        <dbReference type="ChEBI" id="CHEBI:18420"/>
        <label>3</label>
    </ligand>
</feature>